<proteinExistence type="inferred from homology"/>
<gene>
    <name evidence="1" type="primary">dxr</name>
    <name type="ordered locus">LEPBI_I2611</name>
</gene>
<evidence type="ECO:0000255" key="1">
    <source>
        <dbReference type="HAMAP-Rule" id="MF_00183"/>
    </source>
</evidence>
<comment type="function">
    <text evidence="1">Catalyzes the NADPH-dependent rearrangement and reduction of 1-deoxy-D-xylulose-5-phosphate (DXP) to 2-C-methyl-D-erythritol 4-phosphate (MEP).</text>
</comment>
<comment type="catalytic activity">
    <reaction evidence="1">
        <text>2-C-methyl-D-erythritol 4-phosphate + NADP(+) = 1-deoxy-D-xylulose 5-phosphate + NADPH + H(+)</text>
        <dbReference type="Rhea" id="RHEA:13717"/>
        <dbReference type="ChEBI" id="CHEBI:15378"/>
        <dbReference type="ChEBI" id="CHEBI:57783"/>
        <dbReference type="ChEBI" id="CHEBI:57792"/>
        <dbReference type="ChEBI" id="CHEBI:58262"/>
        <dbReference type="ChEBI" id="CHEBI:58349"/>
        <dbReference type="EC" id="1.1.1.267"/>
    </reaction>
    <physiologicalReaction direction="right-to-left" evidence="1">
        <dbReference type="Rhea" id="RHEA:13719"/>
    </physiologicalReaction>
</comment>
<comment type="cofactor">
    <cofactor evidence="1">
        <name>Mg(2+)</name>
        <dbReference type="ChEBI" id="CHEBI:18420"/>
    </cofactor>
    <cofactor evidence="1">
        <name>Mn(2+)</name>
        <dbReference type="ChEBI" id="CHEBI:29035"/>
    </cofactor>
</comment>
<comment type="pathway">
    <text evidence="1">Isoprenoid biosynthesis; isopentenyl diphosphate biosynthesis via DXP pathway; isopentenyl diphosphate from 1-deoxy-D-xylulose 5-phosphate: step 1/6.</text>
</comment>
<comment type="similarity">
    <text evidence="1">Belongs to the DXR family.</text>
</comment>
<feature type="chain" id="PRO_1000098504" description="1-deoxy-D-xylulose 5-phosphate reductoisomerase">
    <location>
        <begin position="1"/>
        <end position="386"/>
    </location>
</feature>
<feature type="binding site" evidence="1">
    <location>
        <position position="10"/>
    </location>
    <ligand>
        <name>NADPH</name>
        <dbReference type="ChEBI" id="CHEBI:57783"/>
    </ligand>
</feature>
<feature type="binding site" evidence="1">
    <location>
        <position position="11"/>
    </location>
    <ligand>
        <name>NADPH</name>
        <dbReference type="ChEBI" id="CHEBI:57783"/>
    </ligand>
</feature>
<feature type="binding site" evidence="1">
    <location>
        <position position="12"/>
    </location>
    <ligand>
        <name>NADPH</name>
        <dbReference type="ChEBI" id="CHEBI:57783"/>
    </ligand>
</feature>
<feature type="binding site" evidence="1">
    <location>
        <position position="13"/>
    </location>
    <ligand>
        <name>NADPH</name>
        <dbReference type="ChEBI" id="CHEBI:57783"/>
    </ligand>
</feature>
<feature type="binding site" evidence="1">
    <location>
        <position position="38"/>
    </location>
    <ligand>
        <name>NADPH</name>
        <dbReference type="ChEBI" id="CHEBI:57783"/>
    </ligand>
</feature>
<feature type="binding site" evidence="1">
    <location>
        <position position="120"/>
    </location>
    <ligand>
        <name>NADPH</name>
        <dbReference type="ChEBI" id="CHEBI:57783"/>
    </ligand>
</feature>
<feature type="binding site" evidence="1">
    <location>
        <position position="121"/>
    </location>
    <ligand>
        <name>1-deoxy-D-xylulose 5-phosphate</name>
        <dbReference type="ChEBI" id="CHEBI:57792"/>
    </ligand>
</feature>
<feature type="binding site" evidence="1">
    <location>
        <position position="122"/>
    </location>
    <ligand>
        <name>NADPH</name>
        <dbReference type="ChEBI" id="CHEBI:57783"/>
    </ligand>
</feature>
<feature type="binding site" evidence="1">
    <location>
        <position position="146"/>
    </location>
    <ligand>
        <name>Mn(2+)</name>
        <dbReference type="ChEBI" id="CHEBI:29035"/>
    </ligand>
</feature>
<feature type="binding site" evidence="1">
    <location>
        <position position="147"/>
    </location>
    <ligand>
        <name>1-deoxy-D-xylulose 5-phosphate</name>
        <dbReference type="ChEBI" id="CHEBI:57792"/>
    </ligand>
</feature>
<feature type="binding site" evidence="1">
    <location>
        <position position="148"/>
    </location>
    <ligand>
        <name>1-deoxy-D-xylulose 5-phosphate</name>
        <dbReference type="ChEBI" id="CHEBI:57792"/>
    </ligand>
</feature>
<feature type="binding site" evidence="1">
    <location>
        <position position="148"/>
    </location>
    <ligand>
        <name>Mn(2+)</name>
        <dbReference type="ChEBI" id="CHEBI:29035"/>
    </ligand>
</feature>
<feature type="binding site" evidence="1">
    <location>
        <position position="172"/>
    </location>
    <ligand>
        <name>1-deoxy-D-xylulose 5-phosphate</name>
        <dbReference type="ChEBI" id="CHEBI:57792"/>
    </ligand>
</feature>
<feature type="binding site" evidence="1">
    <location>
        <position position="195"/>
    </location>
    <ligand>
        <name>1-deoxy-D-xylulose 5-phosphate</name>
        <dbReference type="ChEBI" id="CHEBI:57792"/>
    </ligand>
</feature>
<feature type="binding site" evidence="1">
    <location>
        <position position="201"/>
    </location>
    <ligand>
        <name>NADPH</name>
        <dbReference type="ChEBI" id="CHEBI:57783"/>
    </ligand>
</feature>
<feature type="binding site" evidence="1">
    <location>
        <position position="208"/>
    </location>
    <ligand>
        <name>1-deoxy-D-xylulose 5-phosphate</name>
        <dbReference type="ChEBI" id="CHEBI:57792"/>
    </ligand>
</feature>
<feature type="binding site" evidence="1">
    <location>
        <position position="213"/>
    </location>
    <ligand>
        <name>1-deoxy-D-xylulose 5-phosphate</name>
        <dbReference type="ChEBI" id="CHEBI:57792"/>
    </ligand>
</feature>
<feature type="binding site" evidence="1">
    <location>
        <position position="214"/>
    </location>
    <ligand>
        <name>1-deoxy-D-xylulose 5-phosphate</name>
        <dbReference type="ChEBI" id="CHEBI:57792"/>
    </ligand>
</feature>
<feature type="binding site" evidence="1">
    <location>
        <position position="217"/>
    </location>
    <ligand>
        <name>1-deoxy-D-xylulose 5-phosphate</name>
        <dbReference type="ChEBI" id="CHEBI:57792"/>
    </ligand>
</feature>
<feature type="binding site" evidence="1">
    <location>
        <position position="217"/>
    </location>
    <ligand>
        <name>Mn(2+)</name>
        <dbReference type="ChEBI" id="CHEBI:29035"/>
    </ligand>
</feature>
<keyword id="KW-0414">Isoprene biosynthesis</keyword>
<keyword id="KW-0464">Manganese</keyword>
<keyword id="KW-0479">Metal-binding</keyword>
<keyword id="KW-0521">NADP</keyword>
<keyword id="KW-0560">Oxidoreductase</keyword>
<keyword id="KW-1185">Reference proteome</keyword>
<organism>
    <name type="scientific">Leptospira biflexa serovar Patoc (strain Patoc 1 / ATCC 23582 / Paris)</name>
    <dbReference type="NCBI Taxonomy" id="456481"/>
    <lineage>
        <taxon>Bacteria</taxon>
        <taxon>Pseudomonadati</taxon>
        <taxon>Spirochaetota</taxon>
        <taxon>Spirochaetia</taxon>
        <taxon>Leptospirales</taxon>
        <taxon>Leptospiraceae</taxon>
        <taxon>Leptospira</taxon>
    </lineage>
</organism>
<protein>
    <recommendedName>
        <fullName evidence="1">1-deoxy-D-xylulose 5-phosphate reductoisomerase</fullName>
        <shortName evidence="1">DXP reductoisomerase</shortName>
        <ecNumber evidence="1">1.1.1.267</ecNumber>
    </recommendedName>
    <alternativeName>
        <fullName evidence="1">1-deoxyxylulose-5-phosphate reductoisomerase</fullName>
    </alternativeName>
    <alternativeName>
        <fullName evidence="1">2-C-methyl-D-erythritol 4-phosphate synthase</fullName>
    </alternativeName>
</protein>
<reference key="1">
    <citation type="journal article" date="2008" name="PLoS ONE">
        <title>Genome sequence of the saprophyte Leptospira biflexa provides insights into the evolution of Leptospira and the pathogenesis of leptospirosis.</title>
        <authorList>
            <person name="Picardeau M."/>
            <person name="Bulach D.M."/>
            <person name="Bouchier C."/>
            <person name="Zuerner R.L."/>
            <person name="Zidane N."/>
            <person name="Wilson P.J."/>
            <person name="Creno S."/>
            <person name="Kuczek E.S."/>
            <person name="Bommezzadri S."/>
            <person name="Davis J.C."/>
            <person name="McGrath A."/>
            <person name="Johnson M.J."/>
            <person name="Boursaux-Eude C."/>
            <person name="Seemann T."/>
            <person name="Rouy Z."/>
            <person name="Coppel R.L."/>
            <person name="Rood J.I."/>
            <person name="Lajus A."/>
            <person name="Davies J.K."/>
            <person name="Medigue C."/>
            <person name="Adler B."/>
        </authorList>
    </citation>
    <scope>NUCLEOTIDE SEQUENCE [LARGE SCALE GENOMIC DNA]</scope>
    <source>
        <strain>Patoc 1 / ATCC 23582 / Paris</strain>
    </source>
</reference>
<sequence length="386" mass="42211">MVGVSVLGISGSVGTSTVKVLRQFPDQFDLRSFSVHSNWNVAKALVEEFSPEVICITDPKLVGKFGDSYLSTKILYGDKALIDLVQLPSVGVVVTAVMGARGVLPTIAAIEAGKKIAIANKETLVTFGPLINRLVAKHNTVMVPVDSEHNALFQLIERETRSNIRAITLTASGGSFRTLPLEALEHVSVKQALNHPTWSMGPKITVDSAGLINKGLEVIEAHFLFGFSYDEIEVVIHPQSITHGIIETTDGACLLYASHPDMVYPIAHSLFYPNPTPQMLIERKPSTWNTFEFFPPDTKRYPGLLLAYQAGKAGGAAPGIFNAANEEAVALFLEEKISFTTIPRLIESALNQIENVFPETLDGYLEKDQETRNYIQREFNQGGVTT</sequence>
<name>DXR_LEPBP</name>
<dbReference type="EC" id="1.1.1.267" evidence="1"/>
<dbReference type="EMBL" id="CP000786">
    <property type="protein sequence ID" value="ABZ98690.1"/>
    <property type="molecule type" value="Genomic_DNA"/>
</dbReference>
<dbReference type="RefSeq" id="WP_012389550.1">
    <property type="nucleotide sequence ID" value="NC_010602.1"/>
</dbReference>
<dbReference type="SMR" id="B0SM60"/>
<dbReference type="STRING" id="456481.LEPBI_I2611"/>
<dbReference type="KEGG" id="lbi:LEPBI_I2611"/>
<dbReference type="HOGENOM" id="CLU_035714_4_0_12"/>
<dbReference type="OrthoDB" id="9806546at2"/>
<dbReference type="BioCyc" id="LBIF456481:LEPBI_RS12845-MONOMER"/>
<dbReference type="UniPathway" id="UPA00056">
    <property type="reaction ID" value="UER00092"/>
</dbReference>
<dbReference type="Proteomes" id="UP000001847">
    <property type="component" value="Chromosome I"/>
</dbReference>
<dbReference type="GO" id="GO:0030604">
    <property type="term" value="F:1-deoxy-D-xylulose-5-phosphate reductoisomerase activity"/>
    <property type="evidence" value="ECO:0007669"/>
    <property type="project" value="UniProtKB-UniRule"/>
</dbReference>
<dbReference type="GO" id="GO:0030145">
    <property type="term" value="F:manganese ion binding"/>
    <property type="evidence" value="ECO:0007669"/>
    <property type="project" value="TreeGrafter"/>
</dbReference>
<dbReference type="GO" id="GO:0070402">
    <property type="term" value="F:NADPH binding"/>
    <property type="evidence" value="ECO:0007669"/>
    <property type="project" value="InterPro"/>
</dbReference>
<dbReference type="GO" id="GO:0051484">
    <property type="term" value="P:isopentenyl diphosphate biosynthetic process, methylerythritol 4-phosphate pathway involved in terpenoid biosynthetic process"/>
    <property type="evidence" value="ECO:0007669"/>
    <property type="project" value="TreeGrafter"/>
</dbReference>
<dbReference type="FunFam" id="3.40.50.720:FF:000045">
    <property type="entry name" value="1-deoxy-D-xylulose 5-phosphate reductoisomerase"/>
    <property type="match status" value="1"/>
</dbReference>
<dbReference type="Gene3D" id="1.10.1740.10">
    <property type="match status" value="1"/>
</dbReference>
<dbReference type="Gene3D" id="3.40.50.720">
    <property type="entry name" value="NAD(P)-binding Rossmann-like Domain"/>
    <property type="match status" value="1"/>
</dbReference>
<dbReference type="HAMAP" id="MF_00183">
    <property type="entry name" value="DXP_reductoisom"/>
    <property type="match status" value="1"/>
</dbReference>
<dbReference type="InterPro" id="IPR003821">
    <property type="entry name" value="DXP_reductoisomerase"/>
</dbReference>
<dbReference type="InterPro" id="IPR013644">
    <property type="entry name" value="DXP_reductoisomerase_C"/>
</dbReference>
<dbReference type="InterPro" id="IPR013512">
    <property type="entry name" value="DXP_reductoisomerase_N"/>
</dbReference>
<dbReference type="InterPro" id="IPR026877">
    <property type="entry name" value="DXPR_C"/>
</dbReference>
<dbReference type="InterPro" id="IPR036169">
    <property type="entry name" value="DXPR_C_sf"/>
</dbReference>
<dbReference type="InterPro" id="IPR036291">
    <property type="entry name" value="NAD(P)-bd_dom_sf"/>
</dbReference>
<dbReference type="NCBIfam" id="TIGR00243">
    <property type="entry name" value="Dxr"/>
    <property type="match status" value="1"/>
</dbReference>
<dbReference type="PANTHER" id="PTHR30525">
    <property type="entry name" value="1-DEOXY-D-XYLULOSE 5-PHOSPHATE REDUCTOISOMERASE"/>
    <property type="match status" value="1"/>
</dbReference>
<dbReference type="PANTHER" id="PTHR30525:SF0">
    <property type="entry name" value="1-DEOXY-D-XYLULOSE 5-PHOSPHATE REDUCTOISOMERASE, CHLOROPLASTIC"/>
    <property type="match status" value="1"/>
</dbReference>
<dbReference type="Pfam" id="PF08436">
    <property type="entry name" value="DXP_redisom_C"/>
    <property type="match status" value="1"/>
</dbReference>
<dbReference type="Pfam" id="PF02670">
    <property type="entry name" value="DXP_reductoisom"/>
    <property type="match status" value="1"/>
</dbReference>
<dbReference type="Pfam" id="PF13288">
    <property type="entry name" value="DXPR_C"/>
    <property type="match status" value="1"/>
</dbReference>
<dbReference type="PIRSF" id="PIRSF006205">
    <property type="entry name" value="Dxp_reductismrs"/>
    <property type="match status" value="1"/>
</dbReference>
<dbReference type="SUPFAM" id="SSF69055">
    <property type="entry name" value="1-deoxy-D-xylulose-5-phosphate reductoisomerase, C-terminal domain"/>
    <property type="match status" value="1"/>
</dbReference>
<dbReference type="SUPFAM" id="SSF55347">
    <property type="entry name" value="Glyceraldehyde-3-phosphate dehydrogenase-like, C-terminal domain"/>
    <property type="match status" value="1"/>
</dbReference>
<dbReference type="SUPFAM" id="SSF51735">
    <property type="entry name" value="NAD(P)-binding Rossmann-fold domains"/>
    <property type="match status" value="1"/>
</dbReference>
<accession>B0SM60</accession>